<reference key="1">
    <citation type="journal article" date="2003" name="J. Bacteriol.">
        <title>Comparative analyses of the complete genome sequences of Pierce's disease and citrus variegated chlorosis strains of Xylella fastidiosa.</title>
        <authorList>
            <person name="Van Sluys M.A."/>
            <person name="de Oliveira M.C."/>
            <person name="Monteiro-Vitorello C.B."/>
            <person name="Miyaki C.Y."/>
            <person name="Furlan L.R."/>
            <person name="Camargo L.E.A."/>
            <person name="da Silva A.C.R."/>
            <person name="Moon D.H."/>
            <person name="Takita M.A."/>
            <person name="Lemos E.G.M."/>
            <person name="Machado M.A."/>
            <person name="Ferro M.I.T."/>
            <person name="da Silva F.R."/>
            <person name="Goldman M.H.S."/>
            <person name="Goldman G.H."/>
            <person name="Lemos M.V.F."/>
            <person name="El-Dorry H."/>
            <person name="Tsai S.M."/>
            <person name="Carrer H."/>
            <person name="Carraro D.M."/>
            <person name="de Oliveira R.C."/>
            <person name="Nunes L.R."/>
            <person name="Siqueira W.J."/>
            <person name="Coutinho L.L."/>
            <person name="Kimura E.T."/>
            <person name="Ferro E.S."/>
            <person name="Harakava R."/>
            <person name="Kuramae E.E."/>
            <person name="Marino C.L."/>
            <person name="Giglioti E."/>
            <person name="Abreu I.L."/>
            <person name="Alves L.M.C."/>
            <person name="do Amaral A.M."/>
            <person name="Baia G.S."/>
            <person name="Blanco S.R."/>
            <person name="Brito M.S."/>
            <person name="Cannavan F.S."/>
            <person name="Celestino A.V."/>
            <person name="da Cunha A.F."/>
            <person name="Fenille R.C."/>
            <person name="Ferro J.A."/>
            <person name="Formighieri E.F."/>
            <person name="Kishi L.T."/>
            <person name="Leoni S.G."/>
            <person name="Oliveira A.R."/>
            <person name="Rosa V.E. Jr."/>
            <person name="Sassaki F.T."/>
            <person name="Sena J.A.D."/>
            <person name="de Souza A.A."/>
            <person name="Truffi D."/>
            <person name="Tsukumo F."/>
            <person name="Yanai G.M."/>
            <person name="Zaros L.G."/>
            <person name="Civerolo E.L."/>
            <person name="Simpson A.J.G."/>
            <person name="Almeida N.F. Jr."/>
            <person name="Setubal J.C."/>
            <person name="Kitajima J.P."/>
        </authorList>
    </citation>
    <scope>NUCLEOTIDE SEQUENCE [LARGE SCALE GENOMIC DNA]</scope>
    <source>
        <strain>Temecula1 / ATCC 700964</strain>
    </source>
</reference>
<organism>
    <name type="scientific">Xylella fastidiosa (strain Temecula1 / ATCC 700964)</name>
    <dbReference type="NCBI Taxonomy" id="183190"/>
    <lineage>
        <taxon>Bacteria</taxon>
        <taxon>Pseudomonadati</taxon>
        <taxon>Pseudomonadota</taxon>
        <taxon>Gammaproteobacteria</taxon>
        <taxon>Lysobacterales</taxon>
        <taxon>Lysobacteraceae</taxon>
        <taxon>Xylella</taxon>
    </lineage>
</organism>
<dbReference type="EC" id="2.7.1.39" evidence="1"/>
<dbReference type="EMBL" id="AE009442">
    <property type="protein sequence ID" value="AAO29121.1"/>
    <property type="molecule type" value="Genomic_DNA"/>
</dbReference>
<dbReference type="RefSeq" id="WP_004083414.1">
    <property type="nucleotide sequence ID" value="NC_004556.1"/>
</dbReference>
<dbReference type="SMR" id="Q87C24"/>
<dbReference type="KEGG" id="xft:PD_1272"/>
<dbReference type="HOGENOM" id="CLU_041243_1_1_6"/>
<dbReference type="UniPathway" id="UPA00050">
    <property type="reaction ID" value="UER00064"/>
</dbReference>
<dbReference type="Proteomes" id="UP000002516">
    <property type="component" value="Chromosome"/>
</dbReference>
<dbReference type="GO" id="GO:0005737">
    <property type="term" value="C:cytoplasm"/>
    <property type="evidence" value="ECO:0007669"/>
    <property type="project" value="UniProtKB-SubCell"/>
</dbReference>
<dbReference type="GO" id="GO:0005524">
    <property type="term" value="F:ATP binding"/>
    <property type="evidence" value="ECO:0007669"/>
    <property type="project" value="UniProtKB-UniRule"/>
</dbReference>
<dbReference type="GO" id="GO:0004413">
    <property type="term" value="F:homoserine kinase activity"/>
    <property type="evidence" value="ECO:0007669"/>
    <property type="project" value="UniProtKB-UniRule"/>
</dbReference>
<dbReference type="GO" id="GO:0009088">
    <property type="term" value="P:threonine biosynthetic process"/>
    <property type="evidence" value="ECO:0007669"/>
    <property type="project" value="UniProtKB-UniRule"/>
</dbReference>
<dbReference type="Gene3D" id="3.30.230.10">
    <property type="match status" value="1"/>
</dbReference>
<dbReference type="Gene3D" id="3.30.70.890">
    <property type="entry name" value="GHMP kinase, C-terminal domain"/>
    <property type="match status" value="1"/>
</dbReference>
<dbReference type="HAMAP" id="MF_00384">
    <property type="entry name" value="Homoser_kinase"/>
    <property type="match status" value="1"/>
</dbReference>
<dbReference type="InterPro" id="IPR013750">
    <property type="entry name" value="GHMP_kinase_C_dom"/>
</dbReference>
<dbReference type="InterPro" id="IPR036554">
    <property type="entry name" value="GHMP_kinase_C_sf"/>
</dbReference>
<dbReference type="InterPro" id="IPR006204">
    <property type="entry name" value="GHMP_kinase_N_dom"/>
</dbReference>
<dbReference type="InterPro" id="IPR000870">
    <property type="entry name" value="Homoserine_kinase"/>
</dbReference>
<dbReference type="InterPro" id="IPR020568">
    <property type="entry name" value="Ribosomal_Su5_D2-typ_SF"/>
</dbReference>
<dbReference type="InterPro" id="IPR014721">
    <property type="entry name" value="Ribsml_uS5_D2-typ_fold_subgr"/>
</dbReference>
<dbReference type="NCBIfam" id="NF002288">
    <property type="entry name" value="PRK01212.1-4"/>
    <property type="match status" value="1"/>
</dbReference>
<dbReference type="NCBIfam" id="TIGR00191">
    <property type="entry name" value="thrB"/>
    <property type="match status" value="1"/>
</dbReference>
<dbReference type="PANTHER" id="PTHR20861:SF1">
    <property type="entry name" value="HOMOSERINE KINASE"/>
    <property type="match status" value="1"/>
</dbReference>
<dbReference type="PANTHER" id="PTHR20861">
    <property type="entry name" value="HOMOSERINE/4-DIPHOSPHOCYTIDYL-2-C-METHYL-D-ERYTHRITOL KINASE"/>
    <property type="match status" value="1"/>
</dbReference>
<dbReference type="Pfam" id="PF08544">
    <property type="entry name" value="GHMP_kinases_C"/>
    <property type="match status" value="1"/>
</dbReference>
<dbReference type="Pfam" id="PF00288">
    <property type="entry name" value="GHMP_kinases_N"/>
    <property type="match status" value="1"/>
</dbReference>
<dbReference type="PIRSF" id="PIRSF000676">
    <property type="entry name" value="Homoser_kin"/>
    <property type="match status" value="1"/>
</dbReference>
<dbReference type="PRINTS" id="PR00958">
    <property type="entry name" value="HOMSERKINASE"/>
</dbReference>
<dbReference type="SUPFAM" id="SSF55060">
    <property type="entry name" value="GHMP Kinase, C-terminal domain"/>
    <property type="match status" value="1"/>
</dbReference>
<dbReference type="SUPFAM" id="SSF54211">
    <property type="entry name" value="Ribosomal protein S5 domain 2-like"/>
    <property type="match status" value="1"/>
</dbReference>
<sequence>MNRTLQPDSGASQTAPTAHQARAFAPASVANVAVGFDLLGYPMDQVGDTVTVRRIDTPQVRIAAIRGIAQPLPLQTERNTAGAALLSMHRDLALPFGFELEIDKGIPLSSGMGGSAASCVAALLAANALLDEPLRREHLYRYALDGEAVASGSRHGDNLGPLFLGGLVLCTLERLVPVTVPTAWHSLLVHPDTLLETRRAREVLKEPYLLPDIVTQSANLALVLAGCYHSDAELVRAGLRDVLIEPRRAPLIAGFTAAQQAALQADAMGASISGAGPSVFAWFQTRSAAEAAAPAVRAAFTAAGFDSQAWVTPLTSPGARLL</sequence>
<proteinExistence type="inferred from homology"/>
<name>KHSE_XYLFT</name>
<keyword id="KW-0028">Amino-acid biosynthesis</keyword>
<keyword id="KW-0067">ATP-binding</keyword>
<keyword id="KW-0963">Cytoplasm</keyword>
<keyword id="KW-0418">Kinase</keyword>
<keyword id="KW-0547">Nucleotide-binding</keyword>
<keyword id="KW-1185">Reference proteome</keyword>
<keyword id="KW-0791">Threonine biosynthesis</keyword>
<keyword id="KW-0808">Transferase</keyword>
<feature type="chain" id="PRO_0000156635" description="Homoserine kinase">
    <location>
        <begin position="1"/>
        <end position="322"/>
    </location>
</feature>
<feature type="binding site" evidence="1">
    <location>
        <begin position="107"/>
        <end position="117"/>
    </location>
    <ligand>
        <name>ATP</name>
        <dbReference type="ChEBI" id="CHEBI:30616"/>
    </ligand>
</feature>
<evidence type="ECO:0000255" key="1">
    <source>
        <dbReference type="HAMAP-Rule" id="MF_00384"/>
    </source>
</evidence>
<accession>Q87C24</accession>
<comment type="function">
    <text evidence="1">Catalyzes the ATP-dependent phosphorylation of L-homoserine to L-homoserine phosphate.</text>
</comment>
<comment type="catalytic activity">
    <reaction evidence="1">
        <text>L-homoserine + ATP = O-phospho-L-homoserine + ADP + H(+)</text>
        <dbReference type="Rhea" id="RHEA:13985"/>
        <dbReference type="ChEBI" id="CHEBI:15378"/>
        <dbReference type="ChEBI" id="CHEBI:30616"/>
        <dbReference type="ChEBI" id="CHEBI:57476"/>
        <dbReference type="ChEBI" id="CHEBI:57590"/>
        <dbReference type="ChEBI" id="CHEBI:456216"/>
        <dbReference type="EC" id="2.7.1.39"/>
    </reaction>
</comment>
<comment type="pathway">
    <text evidence="1">Amino-acid biosynthesis; L-threonine biosynthesis; L-threonine from L-aspartate: step 4/5.</text>
</comment>
<comment type="subcellular location">
    <subcellularLocation>
        <location evidence="1">Cytoplasm</location>
    </subcellularLocation>
</comment>
<comment type="similarity">
    <text evidence="1">Belongs to the GHMP kinase family. Homoserine kinase subfamily.</text>
</comment>
<protein>
    <recommendedName>
        <fullName evidence="1">Homoserine kinase</fullName>
        <shortName evidence="1">HK</shortName>
        <shortName evidence="1">HSK</shortName>
        <ecNumber evidence="1">2.7.1.39</ecNumber>
    </recommendedName>
</protein>
<gene>
    <name evidence="1" type="primary">thrB</name>
    <name type="ordered locus">PD_1272</name>
</gene>